<organism>
    <name type="scientific">Methylococcus capsulatus (strain ATCC 33009 / NCIMB 11132 / Bath)</name>
    <dbReference type="NCBI Taxonomy" id="243233"/>
    <lineage>
        <taxon>Bacteria</taxon>
        <taxon>Pseudomonadati</taxon>
        <taxon>Pseudomonadota</taxon>
        <taxon>Gammaproteobacteria</taxon>
        <taxon>Methylococcales</taxon>
        <taxon>Methylococcaceae</taxon>
        <taxon>Methylococcus</taxon>
    </lineage>
</organism>
<feature type="chain" id="PRO_0000182880" description="Deoxyuridine 5'-triphosphate nucleotidohydrolase">
    <location>
        <begin position="1"/>
        <end position="151"/>
    </location>
</feature>
<feature type="binding site" evidence="1">
    <location>
        <begin position="70"/>
        <end position="72"/>
    </location>
    <ligand>
        <name>substrate</name>
    </ligand>
</feature>
<feature type="binding site" evidence="1">
    <location>
        <position position="83"/>
    </location>
    <ligand>
        <name>substrate</name>
    </ligand>
</feature>
<feature type="binding site" evidence="1">
    <location>
        <begin position="87"/>
        <end position="89"/>
    </location>
    <ligand>
        <name>substrate</name>
    </ligand>
</feature>
<accession>Q603M1</accession>
<name>DUT_METCA</name>
<dbReference type="EC" id="3.6.1.23" evidence="1"/>
<dbReference type="EMBL" id="AE017282">
    <property type="protein sequence ID" value="AAU91111.1"/>
    <property type="molecule type" value="Genomic_DNA"/>
</dbReference>
<dbReference type="RefSeq" id="WP_010961985.1">
    <property type="nucleotide sequence ID" value="NC_002977.6"/>
</dbReference>
<dbReference type="SMR" id="Q603M1"/>
<dbReference type="STRING" id="243233.MCA2783"/>
<dbReference type="GeneID" id="88224959"/>
<dbReference type="KEGG" id="mca:MCA2783"/>
<dbReference type="eggNOG" id="COG0756">
    <property type="taxonomic scope" value="Bacteria"/>
</dbReference>
<dbReference type="HOGENOM" id="CLU_068508_1_1_6"/>
<dbReference type="UniPathway" id="UPA00610">
    <property type="reaction ID" value="UER00666"/>
</dbReference>
<dbReference type="Proteomes" id="UP000006821">
    <property type="component" value="Chromosome"/>
</dbReference>
<dbReference type="GO" id="GO:0004170">
    <property type="term" value="F:dUTP diphosphatase activity"/>
    <property type="evidence" value="ECO:0007669"/>
    <property type="project" value="UniProtKB-UniRule"/>
</dbReference>
<dbReference type="GO" id="GO:0000287">
    <property type="term" value="F:magnesium ion binding"/>
    <property type="evidence" value="ECO:0007669"/>
    <property type="project" value="UniProtKB-UniRule"/>
</dbReference>
<dbReference type="GO" id="GO:0006226">
    <property type="term" value="P:dUMP biosynthetic process"/>
    <property type="evidence" value="ECO:0007669"/>
    <property type="project" value="UniProtKB-UniRule"/>
</dbReference>
<dbReference type="GO" id="GO:0046081">
    <property type="term" value="P:dUTP catabolic process"/>
    <property type="evidence" value="ECO:0007669"/>
    <property type="project" value="InterPro"/>
</dbReference>
<dbReference type="CDD" id="cd07557">
    <property type="entry name" value="trimeric_dUTPase"/>
    <property type="match status" value="1"/>
</dbReference>
<dbReference type="FunFam" id="2.70.40.10:FF:000002">
    <property type="entry name" value="dUTP diphosphatase"/>
    <property type="match status" value="1"/>
</dbReference>
<dbReference type="Gene3D" id="2.70.40.10">
    <property type="match status" value="1"/>
</dbReference>
<dbReference type="HAMAP" id="MF_00116">
    <property type="entry name" value="dUTPase_bact"/>
    <property type="match status" value="1"/>
</dbReference>
<dbReference type="InterPro" id="IPR008181">
    <property type="entry name" value="dUTPase"/>
</dbReference>
<dbReference type="InterPro" id="IPR029054">
    <property type="entry name" value="dUTPase-like"/>
</dbReference>
<dbReference type="InterPro" id="IPR036157">
    <property type="entry name" value="dUTPase-like_sf"/>
</dbReference>
<dbReference type="InterPro" id="IPR033704">
    <property type="entry name" value="dUTPase_trimeric"/>
</dbReference>
<dbReference type="NCBIfam" id="TIGR00576">
    <property type="entry name" value="dut"/>
    <property type="match status" value="1"/>
</dbReference>
<dbReference type="NCBIfam" id="NF001862">
    <property type="entry name" value="PRK00601.1"/>
    <property type="match status" value="1"/>
</dbReference>
<dbReference type="PANTHER" id="PTHR11241">
    <property type="entry name" value="DEOXYURIDINE 5'-TRIPHOSPHATE NUCLEOTIDOHYDROLASE"/>
    <property type="match status" value="1"/>
</dbReference>
<dbReference type="PANTHER" id="PTHR11241:SF0">
    <property type="entry name" value="DEOXYURIDINE 5'-TRIPHOSPHATE NUCLEOTIDOHYDROLASE"/>
    <property type="match status" value="1"/>
</dbReference>
<dbReference type="Pfam" id="PF00692">
    <property type="entry name" value="dUTPase"/>
    <property type="match status" value="1"/>
</dbReference>
<dbReference type="SUPFAM" id="SSF51283">
    <property type="entry name" value="dUTPase-like"/>
    <property type="match status" value="1"/>
</dbReference>
<comment type="function">
    <text evidence="1">This enzyme is involved in nucleotide metabolism: it produces dUMP, the immediate precursor of thymidine nucleotides and it decreases the intracellular concentration of dUTP so that uracil cannot be incorporated into DNA.</text>
</comment>
<comment type="catalytic activity">
    <reaction evidence="1">
        <text>dUTP + H2O = dUMP + diphosphate + H(+)</text>
        <dbReference type="Rhea" id="RHEA:10248"/>
        <dbReference type="ChEBI" id="CHEBI:15377"/>
        <dbReference type="ChEBI" id="CHEBI:15378"/>
        <dbReference type="ChEBI" id="CHEBI:33019"/>
        <dbReference type="ChEBI" id="CHEBI:61555"/>
        <dbReference type="ChEBI" id="CHEBI:246422"/>
        <dbReference type="EC" id="3.6.1.23"/>
    </reaction>
</comment>
<comment type="cofactor">
    <cofactor evidence="1">
        <name>Mg(2+)</name>
        <dbReference type="ChEBI" id="CHEBI:18420"/>
    </cofactor>
</comment>
<comment type="pathway">
    <text evidence="1">Pyrimidine metabolism; dUMP biosynthesis; dUMP from dCTP (dUTP route): step 2/2.</text>
</comment>
<comment type="similarity">
    <text evidence="1">Belongs to the dUTPase family.</text>
</comment>
<reference key="1">
    <citation type="journal article" date="2004" name="PLoS Biol.">
        <title>Genomic insights into methanotrophy: the complete genome sequence of Methylococcus capsulatus (Bath).</title>
        <authorList>
            <person name="Ward N.L."/>
            <person name="Larsen O."/>
            <person name="Sakwa J."/>
            <person name="Bruseth L."/>
            <person name="Khouri H.M."/>
            <person name="Durkin A.S."/>
            <person name="Dimitrov G."/>
            <person name="Jiang L."/>
            <person name="Scanlan D."/>
            <person name="Kang K.H."/>
            <person name="Lewis M.R."/>
            <person name="Nelson K.E."/>
            <person name="Methe B.A."/>
            <person name="Wu M."/>
            <person name="Heidelberg J.F."/>
            <person name="Paulsen I.T."/>
            <person name="Fouts D.E."/>
            <person name="Ravel J."/>
            <person name="Tettelin H."/>
            <person name="Ren Q."/>
            <person name="Read T.D."/>
            <person name="DeBoy R.T."/>
            <person name="Seshadri R."/>
            <person name="Salzberg S.L."/>
            <person name="Jensen H.B."/>
            <person name="Birkeland N.K."/>
            <person name="Nelson W.C."/>
            <person name="Dodson R.J."/>
            <person name="Grindhaug S.H."/>
            <person name="Holt I.E."/>
            <person name="Eidhammer I."/>
            <person name="Jonasen I."/>
            <person name="Vanaken S."/>
            <person name="Utterback T.R."/>
            <person name="Feldblyum T.V."/>
            <person name="Fraser C.M."/>
            <person name="Lillehaug J.R."/>
            <person name="Eisen J.A."/>
        </authorList>
    </citation>
    <scope>NUCLEOTIDE SEQUENCE [LARGE SCALE GENOMIC DNA]</scope>
    <source>
        <strain>ATCC 33009 / NCIMB 11132 / Bath</strain>
    </source>
</reference>
<gene>
    <name evidence="1" type="primary">dut</name>
    <name type="ordered locus">MCA2783</name>
</gene>
<sequence>MPKIQIRILDSRLGNEIPLPHYATPGAAGLDLRACLDASLVLQPGETRLIPTGFAIHIGDPDLAAVLLPRSGLGHKHGIVLGNLVGLIDSDYQGQVLVSCWNRGPEPFEIAVGERIAQMVFVPVVQVSFEQVEAFAESRRAEGGFGHTGRH</sequence>
<protein>
    <recommendedName>
        <fullName evidence="1">Deoxyuridine 5'-triphosphate nucleotidohydrolase</fullName>
        <shortName evidence="1">dUTPase</shortName>
        <ecNumber evidence="1">3.6.1.23</ecNumber>
    </recommendedName>
    <alternativeName>
        <fullName evidence="1">dUTP pyrophosphatase</fullName>
    </alternativeName>
</protein>
<evidence type="ECO:0000255" key="1">
    <source>
        <dbReference type="HAMAP-Rule" id="MF_00116"/>
    </source>
</evidence>
<proteinExistence type="inferred from homology"/>
<keyword id="KW-0378">Hydrolase</keyword>
<keyword id="KW-0460">Magnesium</keyword>
<keyword id="KW-0479">Metal-binding</keyword>
<keyword id="KW-0546">Nucleotide metabolism</keyword>
<keyword id="KW-1185">Reference proteome</keyword>